<protein>
    <recommendedName>
        <fullName evidence="1">UDP-N-acetylmuramyl-tripeptide synthetase</fullName>
        <ecNumber evidence="1">6.3.2.-</ecNumber>
    </recommendedName>
    <alternativeName>
        <fullName evidence="1">UDP-MurNAc-tripeptide synthetase</fullName>
    </alternativeName>
</protein>
<evidence type="ECO:0000255" key="1">
    <source>
        <dbReference type="HAMAP-Rule" id="MF_00208"/>
    </source>
</evidence>
<name>MURE_TREDE</name>
<organism>
    <name type="scientific">Treponema denticola (strain ATCC 35405 / DSM 14222 / CIP 103919 / JCM 8153 / KCTC 15104)</name>
    <dbReference type="NCBI Taxonomy" id="243275"/>
    <lineage>
        <taxon>Bacteria</taxon>
        <taxon>Pseudomonadati</taxon>
        <taxon>Spirochaetota</taxon>
        <taxon>Spirochaetia</taxon>
        <taxon>Spirochaetales</taxon>
        <taxon>Treponemataceae</taxon>
        <taxon>Treponema</taxon>
    </lineage>
</organism>
<dbReference type="EC" id="6.3.2.-" evidence="1"/>
<dbReference type="EMBL" id="AE017226">
    <property type="protein sequence ID" value="AAS11316.1"/>
    <property type="molecule type" value="Genomic_DNA"/>
</dbReference>
<dbReference type="RefSeq" id="NP_971435.1">
    <property type="nucleotide sequence ID" value="NC_002967.9"/>
</dbReference>
<dbReference type="SMR" id="Q73PH4"/>
<dbReference type="STRING" id="243275.TDE_0825"/>
<dbReference type="PaxDb" id="243275-TDE_0825"/>
<dbReference type="KEGG" id="tde:TDE_0825"/>
<dbReference type="PATRIC" id="fig|243275.7.peg.795"/>
<dbReference type="eggNOG" id="COG0769">
    <property type="taxonomic scope" value="Bacteria"/>
</dbReference>
<dbReference type="HOGENOM" id="CLU_022291_4_1_12"/>
<dbReference type="OrthoDB" id="9800958at2"/>
<dbReference type="UniPathway" id="UPA00219"/>
<dbReference type="Proteomes" id="UP000008212">
    <property type="component" value="Chromosome"/>
</dbReference>
<dbReference type="GO" id="GO:0005737">
    <property type="term" value="C:cytoplasm"/>
    <property type="evidence" value="ECO:0007669"/>
    <property type="project" value="UniProtKB-SubCell"/>
</dbReference>
<dbReference type="GO" id="GO:0016881">
    <property type="term" value="F:acid-amino acid ligase activity"/>
    <property type="evidence" value="ECO:0007669"/>
    <property type="project" value="UniProtKB-UniRule"/>
</dbReference>
<dbReference type="GO" id="GO:0005524">
    <property type="term" value="F:ATP binding"/>
    <property type="evidence" value="ECO:0007669"/>
    <property type="project" value="UniProtKB-UniRule"/>
</dbReference>
<dbReference type="GO" id="GO:0000287">
    <property type="term" value="F:magnesium ion binding"/>
    <property type="evidence" value="ECO:0007669"/>
    <property type="project" value="UniProtKB-UniRule"/>
</dbReference>
<dbReference type="GO" id="GO:0051301">
    <property type="term" value="P:cell division"/>
    <property type="evidence" value="ECO:0007669"/>
    <property type="project" value="UniProtKB-KW"/>
</dbReference>
<dbReference type="GO" id="GO:0071555">
    <property type="term" value="P:cell wall organization"/>
    <property type="evidence" value="ECO:0007669"/>
    <property type="project" value="UniProtKB-KW"/>
</dbReference>
<dbReference type="GO" id="GO:0009252">
    <property type="term" value="P:peptidoglycan biosynthetic process"/>
    <property type="evidence" value="ECO:0007669"/>
    <property type="project" value="UniProtKB-UniRule"/>
</dbReference>
<dbReference type="GO" id="GO:0008360">
    <property type="term" value="P:regulation of cell shape"/>
    <property type="evidence" value="ECO:0007669"/>
    <property type="project" value="UniProtKB-KW"/>
</dbReference>
<dbReference type="Gene3D" id="3.90.190.20">
    <property type="entry name" value="Mur ligase, C-terminal domain"/>
    <property type="match status" value="1"/>
</dbReference>
<dbReference type="Gene3D" id="3.40.1190.10">
    <property type="entry name" value="Mur-like, catalytic domain"/>
    <property type="match status" value="1"/>
</dbReference>
<dbReference type="Gene3D" id="3.40.1390.10">
    <property type="entry name" value="MurE/MurF, N-terminal domain"/>
    <property type="match status" value="1"/>
</dbReference>
<dbReference type="HAMAP" id="MF_00208">
    <property type="entry name" value="MurE"/>
    <property type="match status" value="1"/>
</dbReference>
<dbReference type="InterPro" id="IPR036565">
    <property type="entry name" value="Mur-like_cat_sf"/>
</dbReference>
<dbReference type="InterPro" id="IPR004101">
    <property type="entry name" value="Mur_ligase_C"/>
</dbReference>
<dbReference type="InterPro" id="IPR036615">
    <property type="entry name" value="Mur_ligase_C_dom_sf"/>
</dbReference>
<dbReference type="InterPro" id="IPR013221">
    <property type="entry name" value="Mur_ligase_cen"/>
</dbReference>
<dbReference type="InterPro" id="IPR000713">
    <property type="entry name" value="Mur_ligase_N"/>
</dbReference>
<dbReference type="InterPro" id="IPR035911">
    <property type="entry name" value="MurE/MurF_N"/>
</dbReference>
<dbReference type="InterPro" id="IPR005761">
    <property type="entry name" value="UDP-N-AcMur-Glu-dNH2Pim_ligase"/>
</dbReference>
<dbReference type="NCBIfam" id="TIGR01085">
    <property type="entry name" value="murE"/>
    <property type="match status" value="1"/>
</dbReference>
<dbReference type="NCBIfam" id="NF001126">
    <property type="entry name" value="PRK00139.1-4"/>
    <property type="match status" value="1"/>
</dbReference>
<dbReference type="PANTHER" id="PTHR23135">
    <property type="entry name" value="MUR LIGASE FAMILY MEMBER"/>
    <property type="match status" value="1"/>
</dbReference>
<dbReference type="PANTHER" id="PTHR23135:SF4">
    <property type="entry name" value="UDP-N-ACETYLMURAMOYL-L-ALANYL-D-GLUTAMATE--2,6-DIAMINOPIMELATE LIGASE MURE HOMOLOG, CHLOROPLASTIC"/>
    <property type="match status" value="1"/>
</dbReference>
<dbReference type="Pfam" id="PF01225">
    <property type="entry name" value="Mur_ligase"/>
    <property type="match status" value="1"/>
</dbReference>
<dbReference type="Pfam" id="PF02875">
    <property type="entry name" value="Mur_ligase_C"/>
    <property type="match status" value="1"/>
</dbReference>
<dbReference type="Pfam" id="PF08245">
    <property type="entry name" value="Mur_ligase_M"/>
    <property type="match status" value="1"/>
</dbReference>
<dbReference type="SUPFAM" id="SSF53623">
    <property type="entry name" value="MurD-like peptide ligases, catalytic domain"/>
    <property type="match status" value="1"/>
</dbReference>
<dbReference type="SUPFAM" id="SSF53244">
    <property type="entry name" value="MurD-like peptide ligases, peptide-binding domain"/>
    <property type="match status" value="1"/>
</dbReference>
<dbReference type="SUPFAM" id="SSF63418">
    <property type="entry name" value="MurE/MurF N-terminal domain"/>
    <property type="match status" value="1"/>
</dbReference>
<comment type="function">
    <text evidence="1">Catalyzes the addition of an amino acid to the nucleotide precursor UDP-N-acetylmuramoyl-L-alanyl-D-glutamate (UMAG) in the biosynthesis of bacterial cell-wall peptidoglycan.</text>
</comment>
<comment type="pathway">
    <text evidence="1">Cell wall biogenesis; peptidoglycan biosynthesis.</text>
</comment>
<comment type="subcellular location">
    <subcellularLocation>
        <location evidence="1">Cytoplasm</location>
    </subcellularLocation>
</comment>
<comment type="PTM">
    <text evidence="1">Carboxylation is probably crucial for Mg(2+) binding and, consequently, for the gamma-phosphate positioning of ATP.</text>
</comment>
<comment type="similarity">
    <text evidence="1">Belongs to the MurCDEF family. MurE subfamily.</text>
</comment>
<reference key="1">
    <citation type="journal article" date="2004" name="Proc. Natl. Acad. Sci. U.S.A.">
        <title>Comparison of the genome of the oral pathogen Treponema denticola with other spirochete genomes.</title>
        <authorList>
            <person name="Seshadri R."/>
            <person name="Myers G.S.A."/>
            <person name="Tettelin H."/>
            <person name="Eisen J.A."/>
            <person name="Heidelberg J.F."/>
            <person name="Dodson R.J."/>
            <person name="Davidsen T.M."/>
            <person name="DeBoy R.T."/>
            <person name="Fouts D.E."/>
            <person name="Haft D.H."/>
            <person name="Selengut J."/>
            <person name="Ren Q."/>
            <person name="Brinkac L.M."/>
            <person name="Madupu R."/>
            <person name="Kolonay J.F."/>
            <person name="Durkin S.A."/>
            <person name="Daugherty S.C."/>
            <person name="Shetty J."/>
            <person name="Shvartsbeyn A."/>
            <person name="Gebregeorgis E."/>
            <person name="Geer K."/>
            <person name="Tsegaye G."/>
            <person name="Malek J.A."/>
            <person name="Ayodeji B."/>
            <person name="Shatsman S."/>
            <person name="McLeod M.P."/>
            <person name="Smajs D."/>
            <person name="Howell J.K."/>
            <person name="Pal S."/>
            <person name="Amin A."/>
            <person name="Vashisth P."/>
            <person name="McNeill T.Z."/>
            <person name="Xiang Q."/>
            <person name="Sodergren E."/>
            <person name="Baca E."/>
            <person name="Weinstock G.M."/>
            <person name="Norris S.J."/>
            <person name="Fraser C.M."/>
            <person name="Paulsen I.T."/>
        </authorList>
    </citation>
    <scope>NUCLEOTIDE SEQUENCE [LARGE SCALE GENOMIC DNA]</scope>
    <source>
        <strain>ATCC 35405 / DSM 14222 / CIP 103919 / JCM 8153 / KCTC 15104</strain>
    </source>
</reference>
<gene>
    <name evidence="1" type="primary">murE</name>
    <name type="ordered locus">TDE_0825</name>
</gene>
<proteinExistence type="inferred from homology"/>
<sequence>MEYTKSIAECIKAIEVVNCFGNDKSLINSVEYDSRKVRAYSYDDKTGLKKGAAFFALPGIHTDGKKFINSAIENGAVCIFYEGDLNNHSCDEICFVQVNDVRKTMSKVSALLYDEPSRTLGVIGVTGTEGKSSTVSFIFQLLNLCGKKAGFFSTVEYSIDGNVIPNPEHQTTPESNVVQLRLAQMRDSGCSYAVVEASSHGLSPKTARLEDVIFDAGVFMNVTQEHLEFHGTIEQYRYDKANLFRALDKNPGKGFPIFGIVNYEDPSAPYFMEATQKNVYPFSTELKDLKKIEEYKGLFAKDIEESSSGIKFTLCDFSSRKEYGCELKLAGIFNVKNILASVLAVQRITGLDIACIIEKLPLVKPVKGRMMLIDEGQDFEVLIDYAHTPSSFMTIFPSIKERIKKSGGKVISLFGSGGERDVKKRPEQGRIAALYSDIVILADEDPRGEDSVELLEMIAAGCPEKKRGEELFIIPDRPSAIKKAFSLAGKNDAVLLLGKGHENSIIFKDRTMPYDEETTARKLLIGADCTNP</sequence>
<keyword id="KW-0067">ATP-binding</keyword>
<keyword id="KW-0131">Cell cycle</keyword>
<keyword id="KW-0132">Cell division</keyword>
<keyword id="KW-0133">Cell shape</keyword>
<keyword id="KW-0961">Cell wall biogenesis/degradation</keyword>
<keyword id="KW-0963">Cytoplasm</keyword>
<keyword id="KW-0436">Ligase</keyword>
<keyword id="KW-0547">Nucleotide-binding</keyword>
<keyword id="KW-0573">Peptidoglycan synthesis</keyword>
<keyword id="KW-1185">Reference proteome</keyword>
<accession>Q73PH4</accession>
<feature type="chain" id="PRO_0000325326" description="UDP-N-acetylmuramyl-tripeptide synthetase">
    <location>
        <begin position="1"/>
        <end position="532"/>
    </location>
</feature>
<feature type="binding site" evidence="1">
    <location>
        <position position="34"/>
    </location>
    <ligand>
        <name>UDP-N-acetyl-alpha-D-muramoyl-L-alanyl-D-glutamate</name>
        <dbReference type="ChEBI" id="CHEBI:83900"/>
    </ligand>
</feature>
<feature type="binding site" evidence="1">
    <location>
        <begin position="127"/>
        <end position="133"/>
    </location>
    <ligand>
        <name>ATP</name>
        <dbReference type="ChEBI" id="CHEBI:30616"/>
    </ligand>
</feature>
<feature type="binding site" evidence="1">
    <location>
        <begin position="171"/>
        <end position="172"/>
    </location>
    <ligand>
        <name>UDP-N-acetyl-alpha-D-muramoyl-L-alanyl-D-glutamate</name>
        <dbReference type="ChEBI" id="CHEBI:83900"/>
    </ligand>
</feature>
<feature type="binding site" evidence="1">
    <location>
        <position position="198"/>
    </location>
    <ligand>
        <name>UDP-N-acetyl-alpha-D-muramoyl-L-alanyl-D-glutamate</name>
        <dbReference type="ChEBI" id="CHEBI:83900"/>
    </ligand>
</feature>
<feature type="binding site" evidence="1">
    <location>
        <position position="208"/>
    </location>
    <ligand>
        <name>UDP-N-acetyl-alpha-D-muramoyl-L-alanyl-D-glutamate</name>
        <dbReference type="ChEBI" id="CHEBI:83900"/>
    </ligand>
</feature>
<feature type="modified residue" description="N6-carboxylysine" evidence="1">
    <location>
        <position position="240"/>
    </location>
</feature>